<feature type="signal peptide" evidence="2">
    <location>
        <begin position="1"/>
        <end position="21"/>
    </location>
</feature>
<feature type="propeptide" id="PRO_0000400877" evidence="4">
    <location>
        <begin position="22"/>
        <end position="74"/>
    </location>
</feature>
<feature type="peptide" id="PRO_0000400878" description="U11-theraphotoxin-Hhn1a">
    <location>
        <begin position="75"/>
        <end position="113"/>
    </location>
</feature>
<feature type="region of interest" description="Disordered" evidence="3">
    <location>
        <begin position="61"/>
        <end position="83"/>
    </location>
</feature>
<feature type="disulfide bond" evidence="1">
    <location>
        <begin position="75"/>
        <end position="90"/>
    </location>
</feature>
<feature type="disulfide bond" evidence="1">
    <location>
        <begin position="82"/>
        <end position="95"/>
    </location>
</feature>
<feature type="disulfide bond" evidence="1">
    <location>
        <begin position="89"/>
        <end position="110"/>
    </location>
</feature>
<comment type="function">
    <text evidence="1">Probable ion channel inhibitor.</text>
</comment>
<comment type="subcellular location">
    <subcellularLocation>
        <location>Secreted</location>
    </subcellularLocation>
</comment>
<comment type="tissue specificity">
    <text>Expressed by the venom gland.</text>
</comment>
<comment type="domain">
    <text evidence="1">The presence of a 'disulfide through disulfide knot' structurally defines this protein as a knottin.</text>
</comment>
<comment type="similarity">
    <text evidence="5">Belongs to the neurotoxin 14 (magi-1) family. 01 (HNTX-16) subfamily.</text>
</comment>
<protein>
    <recommendedName>
        <fullName>U11-theraphotoxin-Hhn1a</fullName>
        <shortName>U11-TRTX-Hhn1a</shortName>
    </recommendedName>
    <alternativeName>
        <fullName>Hainantoxin-XVI.11</fullName>
        <shortName>HNTX-XVI.11</shortName>
    </alternativeName>
    <alternativeName>
        <fullName>Peptide F4-19.87</fullName>
    </alternativeName>
</protein>
<proteinExistence type="evidence at protein level"/>
<organism>
    <name type="scientific">Cyriopagopus hainanus</name>
    <name type="common">Chinese bird spider</name>
    <name type="synonym">Haplopelma hainanum</name>
    <dbReference type="NCBI Taxonomy" id="209901"/>
    <lineage>
        <taxon>Eukaryota</taxon>
        <taxon>Metazoa</taxon>
        <taxon>Ecdysozoa</taxon>
        <taxon>Arthropoda</taxon>
        <taxon>Chelicerata</taxon>
        <taxon>Arachnida</taxon>
        <taxon>Araneae</taxon>
        <taxon>Mygalomorphae</taxon>
        <taxon>Theraphosidae</taxon>
        <taxon>Haplopelma</taxon>
    </lineage>
</organism>
<dbReference type="EMBL" id="GU292940">
    <property type="protein sequence ID" value="ADB56756.1"/>
    <property type="molecule type" value="mRNA"/>
</dbReference>
<dbReference type="ArachnoServer" id="AS001592">
    <property type="toxin name" value="U11-theraphotoxin-Hhn1a"/>
</dbReference>
<dbReference type="GO" id="GO:0005576">
    <property type="term" value="C:extracellular region"/>
    <property type="evidence" value="ECO:0007669"/>
    <property type="project" value="UniProtKB-SubCell"/>
</dbReference>
<dbReference type="GO" id="GO:0019871">
    <property type="term" value="F:sodium channel inhibitor activity"/>
    <property type="evidence" value="ECO:0007669"/>
    <property type="project" value="InterPro"/>
</dbReference>
<dbReference type="GO" id="GO:0090729">
    <property type="term" value="F:toxin activity"/>
    <property type="evidence" value="ECO:0007669"/>
    <property type="project" value="UniProtKB-KW"/>
</dbReference>
<dbReference type="InterPro" id="IPR012627">
    <property type="entry name" value="Toxin_22"/>
</dbReference>
<dbReference type="Pfam" id="PF08092">
    <property type="entry name" value="Toxin_22"/>
    <property type="match status" value="1"/>
</dbReference>
<sequence length="113" mass="13117">MNTVRVTFLLVFVLAVSLGQADKDENRMEMQEKTEQGKSYLDFAENLLLQKLEELEAKLLEEDSEESRNSRQRRCIGEGVPCDENDPRCCSGLVCLKPTLHGIWYKSYYCYKK</sequence>
<name>H1611_CYRHA</name>
<evidence type="ECO:0000250" key="1"/>
<evidence type="ECO:0000255" key="2"/>
<evidence type="ECO:0000256" key="3">
    <source>
        <dbReference type="SAM" id="MobiDB-lite"/>
    </source>
</evidence>
<evidence type="ECO:0000269" key="4">
    <source>
    </source>
</evidence>
<evidence type="ECO:0000305" key="5"/>
<reference key="1">
    <citation type="journal article" date="2010" name="J. Proteome Res.">
        <title>Molecular diversification of peptide toxins from the tarantula Haplopelma hainanum (Ornithoctonus hainana) venom based on transcriptomic, peptidomic, and genomic analyses.</title>
        <authorList>
            <person name="Tang X."/>
            <person name="Zhang Y."/>
            <person name="Hu W."/>
            <person name="Xu D."/>
            <person name="Tao H."/>
            <person name="Yang X."/>
            <person name="Li Y."/>
            <person name="Jiang L."/>
            <person name="Liang S."/>
        </authorList>
    </citation>
    <scope>NUCLEOTIDE SEQUENCE [LARGE SCALE MRNA]</scope>
    <scope>PROTEIN SEQUENCE OF 75-113</scope>
    <scope>IDENTIFICATION BY MASS SPECTROMETRY</scope>
    <source>
        <tissue>Venom</tissue>
        <tissue>Venom gland</tissue>
    </source>
</reference>
<keyword id="KW-0903">Direct protein sequencing</keyword>
<keyword id="KW-1015">Disulfide bond</keyword>
<keyword id="KW-0872">Ion channel impairing toxin</keyword>
<keyword id="KW-0960">Knottin</keyword>
<keyword id="KW-0964">Secreted</keyword>
<keyword id="KW-0732">Signal</keyword>
<keyword id="KW-0800">Toxin</keyword>
<accession>D2Y263</accession>